<dbReference type="EC" id="3.4.21.10"/>
<dbReference type="EMBL" id="D00754">
    <property type="protein sequence ID" value="BAA00651.1"/>
    <property type="status" value="ALT_INIT"/>
    <property type="molecule type" value="mRNA"/>
</dbReference>
<dbReference type="EMBL" id="S66245">
    <property type="protein sequence ID" value="AAB20293.1"/>
    <property type="molecule type" value="Genomic_DNA"/>
</dbReference>
<dbReference type="EMBL" id="S64500">
    <property type="protein sequence ID" value="AAB20293.1"/>
    <property type="status" value="JOINED"/>
    <property type="molecule type" value="Genomic_DNA"/>
</dbReference>
<dbReference type="EMBL" id="S66243">
    <property type="protein sequence ID" value="AAB20293.1"/>
    <property type="status" value="JOINED"/>
    <property type="molecule type" value="Genomic_DNA"/>
</dbReference>
<dbReference type="EMBL" id="X52466">
    <property type="protein sequence ID" value="CAA36704.1"/>
    <property type="status" value="ALT_INIT"/>
    <property type="molecule type" value="mRNA"/>
</dbReference>
<dbReference type="EMBL" id="M85170">
    <property type="protein sequence ID" value="AAA40124.1"/>
    <property type="status" value="ALT_INIT"/>
    <property type="molecule type" value="mRNA"/>
</dbReference>
<dbReference type="EMBL" id="M96430">
    <property type="protein sequence ID" value="AAA37163.1"/>
    <property type="molecule type" value="Genomic_DNA"/>
</dbReference>
<dbReference type="EMBL" id="M96426">
    <property type="protein sequence ID" value="AAA37163.1"/>
    <property type="status" value="JOINED"/>
    <property type="molecule type" value="Genomic_DNA"/>
</dbReference>
<dbReference type="EMBL" id="M96427">
    <property type="protein sequence ID" value="AAA37163.1"/>
    <property type="status" value="JOINED"/>
    <property type="molecule type" value="Genomic_DNA"/>
</dbReference>
<dbReference type="EMBL" id="M96428">
    <property type="protein sequence ID" value="AAA37163.1"/>
    <property type="status" value="JOINED"/>
    <property type="molecule type" value="Genomic_DNA"/>
</dbReference>
<dbReference type="CCDS" id="CCDS27755.1"/>
<dbReference type="PIR" id="A37344">
    <property type="entry name" value="A37344"/>
</dbReference>
<dbReference type="PIR" id="JX0172">
    <property type="entry name" value="JX0172"/>
</dbReference>
<dbReference type="RefSeq" id="NP_038483.1">
    <property type="nucleotide sequence ID" value="NM_013455.4"/>
</dbReference>
<dbReference type="SMR" id="P23578"/>
<dbReference type="BioGRID" id="197930">
    <property type="interactions" value="1"/>
</dbReference>
<dbReference type="FunCoup" id="P23578">
    <property type="interactions" value="126"/>
</dbReference>
<dbReference type="STRING" id="10090.ENSMUSP00000023295"/>
<dbReference type="MEROPS" id="S01.223"/>
<dbReference type="GlyCosmos" id="P23578">
    <property type="glycosylation" value="2 sites, No reported glycans"/>
</dbReference>
<dbReference type="GlyGen" id="P23578">
    <property type="glycosylation" value="3 sites"/>
</dbReference>
<dbReference type="SwissPalm" id="P23578"/>
<dbReference type="jPOST" id="P23578"/>
<dbReference type="PaxDb" id="10090-ENSMUSP00000023295"/>
<dbReference type="ProteomicsDB" id="285845"/>
<dbReference type="Antibodypedia" id="53952">
    <property type="antibodies" value="196 antibodies from 27 providers"/>
</dbReference>
<dbReference type="DNASU" id="11434"/>
<dbReference type="Ensembl" id="ENSMUST00000023295.3">
    <property type="protein sequence ID" value="ENSMUSP00000023295.3"/>
    <property type="gene ID" value="ENSMUSG00000022622.6"/>
</dbReference>
<dbReference type="GeneID" id="11434"/>
<dbReference type="KEGG" id="mmu:11434"/>
<dbReference type="UCSC" id="uc007xhc.2">
    <property type="organism name" value="mouse"/>
</dbReference>
<dbReference type="AGR" id="MGI:87884"/>
<dbReference type="CTD" id="49"/>
<dbReference type="MGI" id="MGI:87884">
    <property type="gene designation" value="Acr"/>
</dbReference>
<dbReference type="VEuPathDB" id="HostDB:ENSMUSG00000022622"/>
<dbReference type="eggNOG" id="KOG3627">
    <property type="taxonomic scope" value="Eukaryota"/>
</dbReference>
<dbReference type="GeneTree" id="ENSGT00940000162430"/>
<dbReference type="HOGENOM" id="CLU_006842_0_4_1"/>
<dbReference type="InParanoid" id="P23578"/>
<dbReference type="OMA" id="LMCRDNV"/>
<dbReference type="OrthoDB" id="6339452at2759"/>
<dbReference type="PhylomeDB" id="P23578"/>
<dbReference type="TreeFam" id="TF335943"/>
<dbReference type="Reactome" id="R-MMU-1300645">
    <property type="pathway name" value="Acrosome Reaction and Sperm:Oocyte Membrane Binding"/>
</dbReference>
<dbReference type="BioGRID-ORCS" id="11434">
    <property type="hits" value="2 hits in 78 CRISPR screens"/>
</dbReference>
<dbReference type="PRO" id="PR:P23578"/>
<dbReference type="Proteomes" id="UP000000589">
    <property type="component" value="Chromosome 15"/>
</dbReference>
<dbReference type="RNAct" id="P23578">
    <property type="molecule type" value="protein"/>
</dbReference>
<dbReference type="Bgee" id="ENSMUSG00000022622">
    <property type="expression patterns" value="Expressed in seminiferous tubule of testis and 48 other cell types or tissues"/>
</dbReference>
<dbReference type="ExpressionAtlas" id="P23578">
    <property type="expression patterns" value="baseline and differential"/>
</dbReference>
<dbReference type="GO" id="GO:0043159">
    <property type="term" value="C:acrosomal matrix"/>
    <property type="evidence" value="ECO:0000304"/>
    <property type="project" value="HGNC-UCL"/>
</dbReference>
<dbReference type="GO" id="GO:0001669">
    <property type="term" value="C:acrosomal vesicle"/>
    <property type="evidence" value="ECO:0000314"/>
    <property type="project" value="MGI"/>
</dbReference>
<dbReference type="GO" id="GO:0005798">
    <property type="term" value="C:Golgi-associated vesicle"/>
    <property type="evidence" value="ECO:0007669"/>
    <property type="project" value="Ensembl"/>
</dbReference>
<dbReference type="GO" id="GO:0032991">
    <property type="term" value="C:protein-containing complex"/>
    <property type="evidence" value="ECO:0007669"/>
    <property type="project" value="Ensembl"/>
</dbReference>
<dbReference type="GO" id="GO:0004040">
    <property type="term" value="F:amidase activity"/>
    <property type="evidence" value="ECO:0000250"/>
    <property type="project" value="UniProtKB"/>
</dbReference>
<dbReference type="GO" id="GO:0005537">
    <property type="term" value="F:D-mannose binding"/>
    <property type="evidence" value="ECO:0000250"/>
    <property type="project" value="UniProtKB"/>
</dbReference>
<dbReference type="GO" id="GO:0042806">
    <property type="term" value="F:fucose binding"/>
    <property type="evidence" value="ECO:0000250"/>
    <property type="project" value="UniProtKB"/>
</dbReference>
<dbReference type="GO" id="GO:0008233">
    <property type="term" value="F:peptidase activity"/>
    <property type="evidence" value="ECO:0000315"/>
    <property type="project" value="MGI"/>
</dbReference>
<dbReference type="GO" id="GO:0004252">
    <property type="term" value="F:serine-type endopeptidase activity"/>
    <property type="evidence" value="ECO:0000250"/>
    <property type="project" value="UniProtKB"/>
</dbReference>
<dbReference type="GO" id="GO:0008236">
    <property type="term" value="F:serine-type peptidase activity"/>
    <property type="evidence" value="ECO:0000250"/>
    <property type="project" value="UniProtKB"/>
</dbReference>
<dbReference type="GO" id="GO:0002077">
    <property type="term" value="P:acrosome matrix dispersal"/>
    <property type="evidence" value="ECO:0007669"/>
    <property type="project" value="Ensembl"/>
</dbReference>
<dbReference type="GO" id="GO:0007340">
    <property type="term" value="P:acrosome reaction"/>
    <property type="evidence" value="ECO:0000250"/>
    <property type="project" value="UniProtKB"/>
</dbReference>
<dbReference type="GO" id="GO:0007190">
    <property type="term" value="P:activation of adenylate cyclase activity"/>
    <property type="evidence" value="ECO:0000250"/>
    <property type="project" value="UniProtKB"/>
</dbReference>
<dbReference type="GO" id="GO:0007339">
    <property type="term" value="P:binding of sperm to zona pellucida"/>
    <property type="evidence" value="ECO:0000316"/>
    <property type="project" value="MGI"/>
</dbReference>
<dbReference type="GO" id="GO:0007341">
    <property type="term" value="P:penetration of zona pellucida"/>
    <property type="evidence" value="ECO:0000315"/>
    <property type="project" value="MGI"/>
</dbReference>
<dbReference type="GO" id="GO:0048545">
    <property type="term" value="P:response to steroid hormone"/>
    <property type="evidence" value="ECO:0007669"/>
    <property type="project" value="Ensembl"/>
</dbReference>
<dbReference type="GO" id="GO:0007338">
    <property type="term" value="P:single fertilization"/>
    <property type="evidence" value="ECO:0000315"/>
    <property type="project" value="UniProtKB"/>
</dbReference>
<dbReference type="CDD" id="cd00190">
    <property type="entry name" value="Tryp_SPc"/>
    <property type="match status" value="1"/>
</dbReference>
<dbReference type="FunFam" id="2.40.10.10:FF:000003">
    <property type="entry name" value="Transmembrane serine protease 3"/>
    <property type="match status" value="1"/>
</dbReference>
<dbReference type="Gene3D" id="2.40.10.10">
    <property type="entry name" value="Trypsin-like serine proteases"/>
    <property type="match status" value="2"/>
</dbReference>
<dbReference type="InterPro" id="IPR012267">
    <property type="entry name" value="Pept_S1A_acrosin"/>
</dbReference>
<dbReference type="InterPro" id="IPR009003">
    <property type="entry name" value="Peptidase_S1_PA"/>
</dbReference>
<dbReference type="InterPro" id="IPR043504">
    <property type="entry name" value="Peptidase_S1_PA_chymotrypsin"/>
</dbReference>
<dbReference type="InterPro" id="IPR001314">
    <property type="entry name" value="Peptidase_S1A"/>
</dbReference>
<dbReference type="InterPro" id="IPR001254">
    <property type="entry name" value="Trypsin_dom"/>
</dbReference>
<dbReference type="InterPro" id="IPR018114">
    <property type="entry name" value="TRYPSIN_HIS"/>
</dbReference>
<dbReference type="InterPro" id="IPR033116">
    <property type="entry name" value="TRYPSIN_SER"/>
</dbReference>
<dbReference type="PANTHER" id="PTHR24252:SF8">
    <property type="entry name" value="ACROSIN"/>
    <property type="match status" value="1"/>
</dbReference>
<dbReference type="PANTHER" id="PTHR24252">
    <property type="entry name" value="ACROSIN-RELATED"/>
    <property type="match status" value="1"/>
</dbReference>
<dbReference type="Pfam" id="PF00089">
    <property type="entry name" value="Trypsin"/>
    <property type="match status" value="1"/>
</dbReference>
<dbReference type="PIRSF" id="PIRSF001141">
    <property type="entry name" value="Acrosin"/>
    <property type="match status" value="1"/>
</dbReference>
<dbReference type="PRINTS" id="PR00722">
    <property type="entry name" value="CHYMOTRYPSIN"/>
</dbReference>
<dbReference type="SMART" id="SM00020">
    <property type="entry name" value="Tryp_SPc"/>
    <property type="match status" value="1"/>
</dbReference>
<dbReference type="SUPFAM" id="SSF50494">
    <property type="entry name" value="Trypsin-like serine proteases"/>
    <property type="match status" value="1"/>
</dbReference>
<dbReference type="PROSITE" id="PS50240">
    <property type="entry name" value="TRYPSIN_DOM"/>
    <property type="match status" value="1"/>
</dbReference>
<dbReference type="PROSITE" id="PS00134">
    <property type="entry name" value="TRYPSIN_HIS"/>
    <property type="match status" value="1"/>
</dbReference>
<dbReference type="PROSITE" id="PS00135">
    <property type="entry name" value="TRYPSIN_SER"/>
    <property type="match status" value="1"/>
</dbReference>
<sequence length="436" mass="48929">MVEMLPTVAVLVLAVSVVAKDNTTCDGPCGLRFRQNSQAGTRIVSGQSAQLGAWPWMVSLQIFTSHNSRRYHACGGSLLNSHWVLTAAHCFDNKKKVYDWRLVFGAQEIEYGRNKPVKEPQQERYVQKIVIHEKYNVVTEGNDIALLKITPPVTCGNFIGPCCLPHFKAGPPQIPHTCYVTGWGYIKEKAPRPSPVLMEARVDLIDLDLCNSTQWYNGRVTSTNVCAGYPEGKIDTCQGDSGGPLMCRDNVDSPFVVVGITSWGVGCARAKRPGVYTATWDYLDWIASKIGPNALHLIQPATPHPPTTRHPMVSFHPPSLRPPWYFQHLPSRPLYLRPLRPLLHRPSSTQTSSSLMPLLSPPTPAQPASFTIATQHMRHRTTLSFARRLQRLIEALKMRTYPMKHPSQYSGPRNYHYRFSTFEPLSNKPSEPFLHS</sequence>
<feature type="signal peptide">
    <location>
        <begin position="1"/>
        <end position="19"/>
    </location>
</feature>
<feature type="chain" id="PRO_0000027522" description="Acrosin">
    <location>
        <begin position="20"/>
        <end position="436"/>
    </location>
</feature>
<feature type="chain" id="PRO_0000027523" description="Acrosin light chain">
    <location>
        <begin position="20"/>
        <end position="42"/>
    </location>
</feature>
<feature type="chain" id="PRO_0000027524" description="Acrosin heavy chain">
    <location>
        <begin position="43"/>
        <end position="345"/>
    </location>
</feature>
<feature type="propeptide" id="PRO_0000027525" description="Pro-rich" evidence="1">
    <location>
        <begin position="346"/>
        <end position="436"/>
    </location>
</feature>
<feature type="domain" description="Peptidase S1" evidence="2">
    <location>
        <begin position="43"/>
        <end position="291"/>
    </location>
</feature>
<feature type="active site" description="Charge relay system" evidence="1">
    <location>
        <position position="89"/>
    </location>
</feature>
<feature type="active site" description="Charge relay system" evidence="1">
    <location>
        <position position="143"/>
    </location>
</feature>
<feature type="active site" description="Charge relay system" evidence="1">
    <location>
        <position position="241"/>
    </location>
</feature>
<feature type="glycosylation site" description="N-linked (GlcNAc...) asparagine" evidence="1">
    <location>
        <position position="22"/>
    </location>
</feature>
<feature type="glycosylation site" description="N-linked (GlcNAc...) asparagine" evidence="1">
    <location>
        <position position="211"/>
    </location>
</feature>
<feature type="disulfide bond" description="Interchain (between light and heavy chains)" evidence="2">
    <location>
        <begin position="25"/>
        <end position="155"/>
    </location>
</feature>
<feature type="disulfide bond" description="Interchain (between light and heavy chains)" evidence="2">
    <location>
        <begin position="29"/>
        <end position="163"/>
    </location>
</feature>
<feature type="disulfide bond" evidence="2">
    <location>
        <begin position="74"/>
        <end position="90"/>
    </location>
</feature>
<feature type="disulfide bond" evidence="2">
    <location>
        <begin position="178"/>
        <end position="247"/>
    </location>
</feature>
<feature type="disulfide bond" evidence="2">
    <location>
        <begin position="210"/>
        <end position="226"/>
    </location>
</feature>
<feature type="disulfide bond" evidence="2">
    <location>
        <begin position="237"/>
        <end position="267"/>
    </location>
</feature>
<feature type="sequence conflict" description="In Ref. 3; CAA36704/AAA40124." evidence="3" ref="3">
    <location>
        <position position="8"/>
    </location>
</feature>
<feature type="sequence conflict" description="In Ref. 3; CAA36704/AAA40124." evidence="3" ref="3">
    <original>VLVLA</original>
    <variation>FWSVK</variation>
    <location>
        <begin position="10"/>
        <end position="14"/>
    </location>
</feature>
<feature type="sequence conflict" description="In Ref. 3; CAA36704/AAA40124." evidence="3" ref="3">
    <original>VV</original>
    <variation>AG</variation>
    <location>
        <begin position="17"/>
        <end position="18"/>
    </location>
</feature>
<feature type="sequence conflict" description="In Ref. 3; CAA36704/AAA40124." evidence="3" ref="3">
    <original>T</original>
    <variation>A</variation>
    <location>
        <position position="23"/>
    </location>
</feature>
<feature type="sequence conflict" description="In Ref. 3; CAA36704/AAA40124." evidence="3" ref="3">
    <original>D</original>
    <variation>F</variation>
    <location>
        <position position="26"/>
    </location>
</feature>
<feature type="sequence conflict" description="In Ref. 3; CAA36704/AAA40124." evidence="3" ref="3">
    <original>F</original>
    <variation>T</variation>
    <location>
        <position position="33"/>
    </location>
</feature>
<feature type="sequence conflict" description="In Ref. 3; CAA36704/AAA40124." evidence="3" ref="3">
    <original>QL</original>
    <variation>HV</variation>
    <location>
        <begin position="50"/>
        <end position="51"/>
    </location>
</feature>
<feature type="sequence conflict" description="In Ref. 3; CAA36704/AAA40124 and 4." evidence="3" ref="3 4">
    <original>Q</original>
    <variation>E</variation>
    <location>
        <position position="122"/>
    </location>
</feature>
<feature type="sequence conflict" description="In Ref. 3; CAA36704/AAA40124 and 4." evidence="3" ref="3 4">
    <original>I</original>
    <variation>V</variation>
    <location>
        <position position="149"/>
    </location>
</feature>
<feature type="sequence conflict" description="In Ref. 3; AAA40124." evidence="3" ref="3">
    <original>QI</original>
    <variation>RNT</variation>
    <location>
        <begin position="173"/>
        <end position="174"/>
    </location>
</feature>
<feature type="sequence conflict" description="In Ref. 3; CAA36704." evidence="3" ref="3">
    <original>Q</original>
    <variation>RK</variation>
    <location>
        <position position="173"/>
    </location>
</feature>
<feature type="sequence conflict" description="In Ref. 3; AAA40124." evidence="3" ref="3">
    <original>TCYVTGW</original>
    <variation>LLRDWV</variation>
    <location>
        <begin position="177"/>
        <end position="183"/>
    </location>
</feature>
<feature type="sequence conflict" description="In Ref. 3; AAA40124." evidence="3" ref="3">
    <original>YI</original>
    <variation>IH</variation>
    <location>
        <begin position="185"/>
        <end position="186"/>
    </location>
</feature>
<feature type="sequence conflict" description="In Ref. 3; CAA36704/AAA40124." evidence="3" ref="3">
    <original>EK</original>
    <variation>RE</variation>
    <location>
        <begin position="188"/>
        <end position="189"/>
    </location>
</feature>
<feature type="sequence conflict" description="In Ref. 3; CAA36704/AAA40124." evidence="3" ref="3">
    <original>VDS</original>
    <variation>ARQ</variation>
    <location>
        <begin position="251"/>
        <end position="253"/>
    </location>
</feature>
<feature type="sequence conflict" description="In Ref. 3; AAA40124 and 4; AAA37163." evidence="3" ref="3 4">
    <original>FVVVGITSWGVGCA</original>
    <variation>LCGRGDHELGGRLC</variation>
    <location>
        <begin position="255"/>
        <end position="268"/>
    </location>
</feature>
<feature type="sequence conflict" description="In Ref. 3; CAA36704/AAA40124." evidence="3" ref="3">
    <original>QP</original>
    <variation>PA</variation>
    <location>
        <begin position="299"/>
        <end position="300"/>
    </location>
</feature>
<feature type="sequence conflict" description="In Ref. 3; CAA36704/AAA40124." evidence="3" ref="3">
    <original>L</original>
    <variation>F</variation>
    <location>
        <position position="320"/>
    </location>
</feature>
<feature type="sequence conflict" description="In Ref. 3; CAA36704/AAA40124." evidence="3" ref="3">
    <original>H</original>
    <variation>Y</variation>
    <location>
        <position position="405"/>
    </location>
</feature>
<feature type="sequence conflict" description="In Ref. 3; CAA36704/AAA40124 and 4." evidence="3" ref="3 4">
    <original>SQYSGPRNYHYRFSTFEPLSNKPSEPFLHS</original>
    <variation>PSTVDKELPLPLLHV</variation>
    <location>
        <begin position="407"/>
        <end position="436"/>
    </location>
</feature>
<organism>
    <name type="scientific">Mus musculus</name>
    <name type="common">Mouse</name>
    <dbReference type="NCBI Taxonomy" id="10090"/>
    <lineage>
        <taxon>Eukaryota</taxon>
        <taxon>Metazoa</taxon>
        <taxon>Chordata</taxon>
        <taxon>Craniata</taxon>
        <taxon>Vertebrata</taxon>
        <taxon>Euteleostomi</taxon>
        <taxon>Mammalia</taxon>
        <taxon>Eutheria</taxon>
        <taxon>Euarchontoglires</taxon>
        <taxon>Glires</taxon>
        <taxon>Rodentia</taxon>
        <taxon>Myomorpha</taxon>
        <taxon>Muroidea</taxon>
        <taxon>Muridae</taxon>
        <taxon>Murinae</taxon>
        <taxon>Mus</taxon>
        <taxon>Mus</taxon>
    </lineage>
</organism>
<proteinExistence type="evidence at protein level"/>
<protein>
    <recommendedName>
        <fullName>Acrosin</fullName>
        <ecNumber>3.4.21.10</ecNumber>
    </recommendedName>
    <component>
        <recommendedName>
            <fullName>Acrosin light chain</fullName>
        </recommendedName>
    </component>
    <component>
        <recommendedName>
            <fullName>Acrosin heavy chain</fullName>
        </recommendedName>
    </component>
</protein>
<keyword id="KW-1015">Disulfide bond</keyword>
<keyword id="KW-0325">Glycoprotein</keyword>
<keyword id="KW-0378">Hydrolase</keyword>
<keyword id="KW-0645">Protease</keyword>
<keyword id="KW-1185">Reference proteome</keyword>
<keyword id="KW-0720">Serine protease</keyword>
<keyword id="KW-0732">Signal</keyword>
<keyword id="KW-0865">Zymogen</keyword>
<accession>P23578</accession>
<evidence type="ECO:0000250" key="1"/>
<evidence type="ECO:0000255" key="2">
    <source>
        <dbReference type="PROSITE-ProRule" id="PRU00274"/>
    </source>
</evidence>
<evidence type="ECO:0000305" key="3"/>
<gene>
    <name type="primary">Acr</name>
</gene>
<name>ACRO_MOUSE</name>
<comment type="function">
    <text>Acrosin is the major protease of mammalian spermatozoa. It is a serine protease of trypsin-like cleavage specificity, it is synthesized in a zymogen form, proacrosin and stored in the acrosome.</text>
</comment>
<comment type="catalytic activity">
    <reaction>
        <text>Preferential cleavage: Arg-|-Xaa, Lys-|-Xaa.</text>
        <dbReference type="EC" id="3.4.21.10"/>
    </reaction>
</comment>
<comment type="activity regulation">
    <text evidence="1">Inhibited by SERPINA5.</text>
</comment>
<comment type="subunit">
    <text evidence="1">Heavy chain (catalytic) and a light chain linked by two disulfide bonds. Forms a heterodimer with SERPINA5 (By similarity).</text>
</comment>
<comment type="similarity">
    <text evidence="2">Belongs to the peptidase S1 family.</text>
</comment>
<comment type="sequence caution" evidence="3">
    <conflict type="erroneous initiation">
        <sequence resource="EMBL-CDS" id="AAA40124"/>
    </conflict>
</comment>
<comment type="sequence caution" evidence="3">
    <conflict type="erroneous initiation">
        <sequence resource="EMBL-CDS" id="BAA00651"/>
    </conflict>
</comment>
<comment type="sequence caution" evidence="3">
    <conflict type="erroneous initiation">
        <sequence resource="EMBL-CDS" id="CAA36704"/>
    </conflict>
</comment>
<reference key="1">
    <citation type="journal article" date="1990" name="J. Biochem.">
        <title>Primary structure of mouse proacrosin deduced from the cDNA sequence and its gene expression during spermatogenesis.</title>
        <authorList>
            <person name="Kashiwabara S."/>
            <person name="Baba T."/>
            <person name="Takada M."/>
            <person name="Watanabe K."/>
            <person name="Yano Y."/>
            <person name="Arai Y."/>
        </authorList>
    </citation>
    <scope>NUCLEOTIDE SEQUENCE [MRNA]</scope>
</reference>
<reference key="2">
    <citation type="journal article" date="1991" name="J. Biochem.">
        <title>Structure and organization of the mouse acrosin gene.</title>
        <authorList>
            <person name="Watanabe K."/>
            <person name="Baba T."/>
            <person name="Kashiwabara S."/>
            <person name="Okamoto A."/>
            <person name="Arai Y."/>
        </authorList>
    </citation>
    <scope>NUCLEOTIDE SEQUENCE [GENOMIC DNA]</scope>
</reference>
<reference key="3">
    <citation type="journal article" date="1990" name="Differentiation">
        <title>Mouse preproacrosin: cDNA sequence, primary structure and postmeiotic expression in spermatogenesis.</title>
        <authorList>
            <person name="Klemm U."/>
            <person name="Maier W.-M."/>
            <person name="Tsaousidou S."/>
            <person name="Adham I.M."/>
            <person name="Willison K."/>
            <person name="Engel W."/>
        </authorList>
    </citation>
    <scope>NUCLEOTIDE SEQUENCE [MRNA]</scope>
</reference>
<reference key="4">
    <citation type="journal article" date="1991" name="Genomics">
        <title>Mouse proacrosin gene: nucleotide sequence, diploid expression, and chromosomal localization.</title>
        <authorList>
            <person name="Kremling H."/>
            <person name="Keime S."/>
            <person name="Wilhelm K."/>
            <person name="Adham I.M."/>
            <person name="Hameister H."/>
            <person name="Engel W."/>
        </authorList>
    </citation>
    <scope>NUCLEOTIDE SEQUENCE [GENOMIC DNA]</scope>
</reference>
<reference key="5">
    <citation type="journal article" date="2010" name="Cell">
        <title>A tissue-specific atlas of mouse protein phosphorylation and expression.</title>
        <authorList>
            <person name="Huttlin E.L."/>
            <person name="Jedrychowski M.P."/>
            <person name="Elias J.E."/>
            <person name="Goswami T."/>
            <person name="Rad R."/>
            <person name="Beausoleil S.A."/>
            <person name="Villen J."/>
            <person name="Haas W."/>
            <person name="Sowa M.E."/>
            <person name="Gygi S.P."/>
        </authorList>
    </citation>
    <scope>IDENTIFICATION BY MASS SPECTROMETRY [LARGE SCALE ANALYSIS]</scope>
    <source>
        <tissue>Testis</tissue>
    </source>
</reference>